<reference key="1">
    <citation type="journal article" date="2008" name="J. Bacteriol.">
        <title>Insights into plant cell wall degradation from the genome sequence of the soil bacterium Cellvibrio japonicus.</title>
        <authorList>
            <person name="DeBoy R.T."/>
            <person name="Mongodin E.F."/>
            <person name="Fouts D.E."/>
            <person name="Tailford L.E."/>
            <person name="Khouri H."/>
            <person name="Emerson J.B."/>
            <person name="Mohamoud Y."/>
            <person name="Watkins K."/>
            <person name="Henrissat B."/>
            <person name="Gilbert H.J."/>
            <person name="Nelson K.E."/>
        </authorList>
    </citation>
    <scope>NUCLEOTIDE SEQUENCE [LARGE SCALE GENOMIC DNA]</scope>
    <source>
        <strain>Ueda107</strain>
    </source>
</reference>
<sequence length="178" mass="19270">MAELTTLARPYAKAAFEFAQAANQLQSWYEALEVSAAVAAQEQVKKALAASALSAQQKASVFVQVCGDQLDEKQQNFIRTLASNKRLALLPYIKELFARMKAQQEKTIDVEVTAAYELPVDLINKLAQALSAKLDRNVSVHSSINKSLLGGVVIHTGDTVIDGSVRGRLAKLAEALKS</sequence>
<proteinExistence type="inferred from homology"/>
<organism>
    <name type="scientific">Cellvibrio japonicus (strain Ueda107)</name>
    <name type="common">Pseudomonas fluorescens subsp. cellulosa</name>
    <dbReference type="NCBI Taxonomy" id="498211"/>
    <lineage>
        <taxon>Bacteria</taxon>
        <taxon>Pseudomonadati</taxon>
        <taxon>Pseudomonadota</taxon>
        <taxon>Gammaproteobacteria</taxon>
        <taxon>Cellvibrionales</taxon>
        <taxon>Cellvibrionaceae</taxon>
        <taxon>Cellvibrio</taxon>
    </lineage>
</organism>
<comment type="function">
    <text evidence="1">F(1)F(0) ATP synthase produces ATP from ADP in the presence of a proton or sodium gradient. F-type ATPases consist of two structural domains, F(1) containing the extramembraneous catalytic core and F(0) containing the membrane proton channel, linked together by a central stalk and a peripheral stalk. During catalysis, ATP synthesis in the catalytic domain of F(1) is coupled via a rotary mechanism of the central stalk subunits to proton translocation.</text>
</comment>
<comment type="function">
    <text evidence="1">This protein is part of the stalk that links CF(0) to CF(1). It either transmits conformational changes from CF(0) to CF(1) or is implicated in proton conduction.</text>
</comment>
<comment type="subunit">
    <text evidence="1">F-type ATPases have 2 components, F(1) - the catalytic core - and F(0) - the membrane proton channel. F(1) has five subunits: alpha(3), beta(3), gamma(1), delta(1), epsilon(1). F(0) has three main subunits: a(1), b(2) and c(10-14). The alpha and beta chains form an alternating ring which encloses part of the gamma chain. F(1) is attached to F(0) by a central stalk formed by the gamma and epsilon chains, while a peripheral stalk is formed by the delta and b chains.</text>
</comment>
<comment type="subcellular location">
    <subcellularLocation>
        <location evidence="1">Cell inner membrane</location>
        <topology evidence="1">Peripheral membrane protein</topology>
    </subcellularLocation>
</comment>
<comment type="similarity">
    <text evidence="1">Belongs to the ATPase delta chain family.</text>
</comment>
<accession>B3PIT0</accession>
<gene>
    <name evidence="1" type="primary">atpH</name>
    <name type="ordered locus">CJA_3812</name>
</gene>
<keyword id="KW-0066">ATP synthesis</keyword>
<keyword id="KW-0997">Cell inner membrane</keyword>
<keyword id="KW-1003">Cell membrane</keyword>
<keyword id="KW-0139">CF(1)</keyword>
<keyword id="KW-0375">Hydrogen ion transport</keyword>
<keyword id="KW-0406">Ion transport</keyword>
<keyword id="KW-0472">Membrane</keyword>
<keyword id="KW-1185">Reference proteome</keyword>
<keyword id="KW-0813">Transport</keyword>
<feature type="chain" id="PRO_0000370934" description="ATP synthase subunit delta">
    <location>
        <begin position="1"/>
        <end position="178"/>
    </location>
</feature>
<protein>
    <recommendedName>
        <fullName evidence="1">ATP synthase subunit delta</fullName>
    </recommendedName>
    <alternativeName>
        <fullName evidence="1">ATP synthase F(1) sector subunit delta</fullName>
    </alternativeName>
    <alternativeName>
        <fullName evidence="1">F-type ATPase subunit delta</fullName>
        <shortName evidence="1">F-ATPase subunit delta</shortName>
    </alternativeName>
</protein>
<dbReference type="EMBL" id="CP000934">
    <property type="protein sequence ID" value="ACE85891.1"/>
    <property type="molecule type" value="Genomic_DNA"/>
</dbReference>
<dbReference type="RefSeq" id="WP_012489375.1">
    <property type="nucleotide sequence ID" value="NC_010995.1"/>
</dbReference>
<dbReference type="SMR" id="B3PIT0"/>
<dbReference type="STRING" id="498211.CJA_3812"/>
<dbReference type="KEGG" id="cja:CJA_3812"/>
<dbReference type="eggNOG" id="COG0712">
    <property type="taxonomic scope" value="Bacteria"/>
</dbReference>
<dbReference type="HOGENOM" id="CLU_085114_3_0_6"/>
<dbReference type="OrthoDB" id="9816221at2"/>
<dbReference type="Proteomes" id="UP000001036">
    <property type="component" value="Chromosome"/>
</dbReference>
<dbReference type="GO" id="GO:0005886">
    <property type="term" value="C:plasma membrane"/>
    <property type="evidence" value="ECO:0007669"/>
    <property type="project" value="UniProtKB-SubCell"/>
</dbReference>
<dbReference type="GO" id="GO:0045259">
    <property type="term" value="C:proton-transporting ATP synthase complex"/>
    <property type="evidence" value="ECO:0007669"/>
    <property type="project" value="UniProtKB-KW"/>
</dbReference>
<dbReference type="GO" id="GO:0046933">
    <property type="term" value="F:proton-transporting ATP synthase activity, rotational mechanism"/>
    <property type="evidence" value="ECO:0007669"/>
    <property type="project" value="UniProtKB-UniRule"/>
</dbReference>
<dbReference type="Gene3D" id="1.10.520.20">
    <property type="entry name" value="N-terminal domain of the delta subunit of the F1F0-ATP synthase"/>
    <property type="match status" value="1"/>
</dbReference>
<dbReference type="HAMAP" id="MF_01416">
    <property type="entry name" value="ATP_synth_delta_bact"/>
    <property type="match status" value="1"/>
</dbReference>
<dbReference type="InterPro" id="IPR026015">
    <property type="entry name" value="ATP_synth_OSCP/delta_N_sf"/>
</dbReference>
<dbReference type="InterPro" id="IPR020781">
    <property type="entry name" value="ATPase_OSCP/d_CS"/>
</dbReference>
<dbReference type="InterPro" id="IPR000711">
    <property type="entry name" value="ATPase_OSCP/dsu"/>
</dbReference>
<dbReference type="NCBIfam" id="TIGR01145">
    <property type="entry name" value="ATP_synt_delta"/>
    <property type="match status" value="1"/>
</dbReference>
<dbReference type="NCBIfam" id="NF004402">
    <property type="entry name" value="PRK05758.2-2"/>
    <property type="match status" value="1"/>
</dbReference>
<dbReference type="PANTHER" id="PTHR11910">
    <property type="entry name" value="ATP SYNTHASE DELTA CHAIN"/>
    <property type="match status" value="1"/>
</dbReference>
<dbReference type="Pfam" id="PF00213">
    <property type="entry name" value="OSCP"/>
    <property type="match status" value="1"/>
</dbReference>
<dbReference type="PRINTS" id="PR00125">
    <property type="entry name" value="ATPASEDELTA"/>
</dbReference>
<dbReference type="SUPFAM" id="SSF47928">
    <property type="entry name" value="N-terminal domain of the delta subunit of the F1F0-ATP synthase"/>
    <property type="match status" value="1"/>
</dbReference>
<dbReference type="PROSITE" id="PS00389">
    <property type="entry name" value="ATPASE_DELTA"/>
    <property type="match status" value="1"/>
</dbReference>
<evidence type="ECO:0000255" key="1">
    <source>
        <dbReference type="HAMAP-Rule" id="MF_01416"/>
    </source>
</evidence>
<name>ATPD_CELJU</name>